<evidence type="ECO:0000255" key="1">
    <source>
        <dbReference type="HAMAP-Rule" id="MF_00293"/>
    </source>
</evidence>
<accession>Q3C1K1</accession>
<gene>
    <name evidence="1" type="primary">psbN</name>
</gene>
<feature type="chain" id="PRO_0000232775" description="Protein PsbN">
    <location>
        <begin position="1"/>
        <end position="43"/>
    </location>
</feature>
<feature type="transmembrane region" description="Helical" evidence="1">
    <location>
        <begin position="7"/>
        <end position="27"/>
    </location>
</feature>
<dbReference type="EMBL" id="AB237912">
    <property type="protein sequence ID" value="BAE46682.1"/>
    <property type="molecule type" value="Genomic_DNA"/>
</dbReference>
<dbReference type="RefSeq" id="YP_358706.1">
    <property type="nucleotide sequence ID" value="NC_007500.1"/>
</dbReference>
<dbReference type="SMR" id="Q3C1K1"/>
<dbReference type="GeneID" id="3735113"/>
<dbReference type="KEGG" id="nsy:3735113"/>
<dbReference type="OrthoDB" id="18592at4085"/>
<dbReference type="Proteomes" id="UP000189701">
    <property type="component" value="Chloroplast Pltd"/>
</dbReference>
<dbReference type="GO" id="GO:0009535">
    <property type="term" value="C:chloroplast thylakoid membrane"/>
    <property type="evidence" value="ECO:0007669"/>
    <property type="project" value="UniProtKB-SubCell"/>
</dbReference>
<dbReference type="GO" id="GO:0015979">
    <property type="term" value="P:photosynthesis"/>
    <property type="evidence" value="ECO:0007669"/>
    <property type="project" value="InterPro"/>
</dbReference>
<dbReference type="HAMAP" id="MF_00293">
    <property type="entry name" value="PSII_PsbN"/>
    <property type="match status" value="1"/>
</dbReference>
<dbReference type="InterPro" id="IPR003398">
    <property type="entry name" value="PSII_PsbN"/>
</dbReference>
<dbReference type="PANTHER" id="PTHR35326">
    <property type="entry name" value="PROTEIN PSBN"/>
    <property type="match status" value="1"/>
</dbReference>
<dbReference type="PANTHER" id="PTHR35326:SF3">
    <property type="entry name" value="PROTEIN PSBN"/>
    <property type="match status" value="1"/>
</dbReference>
<dbReference type="Pfam" id="PF02468">
    <property type="entry name" value="PsbN"/>
    <property type="match status" value="1"/>
</dbReference>
<sequence>METATLVAIFISGLLVSFTGYALYTAFGQPSQQLRDPFEEHGD</sequence>
<proteinExistence type="inferred from homology"/>
<comment type="function">
    <text evidence="1">May play a role in photosystem I and II biogenesis.</text>
</comment>
<comment type="subcellular location">
    <subcellularLocation>
        <location evidence="1">Plastid</location>
        <location evidence="1">Chloroplast thylakoid membrane</location>
        <topology evidence="1">Single-pass membrane protein</topology>
    </subcellularLocation>
</comment>
<comment type="similarity">
    <text evidence="1">Belongs to the PsbN family.</text>
</comment>
<comment type="caution">
    <text evidence="1">Originally thought to be a component of PSII; based on experiments in Synechocystis, N.tabacum and barley, and its absence from PSII in T.elongatus and T.vulcanus, this is probably not true.</text>
</comment>
<name>PSBN_NICSY</name>
<organism>
    <name type="scientific">Nicotiana sylvestris</name>
    <name type="common">Wood tobacco</name>
    <name type="synonym">South American tobacco</name>
    <dbReference type="NCBI Taxonomy" id="4096"/>
    <lineage>
        <taxon>Eukaryota</taxon>
        <taxon>Viridiplantae</taxon>
        <taxon>Streptophyta</taxon>
        <taxon>Embryophyta</taxon>
        <taxon>Tracheophyta</taxon>
        <taxon>Spermatophyta</taxon>
        <taxon>Magnoliopsida</taxon>
        <taxon>eudicotyledons</taxon>
        <taxon>Gunneridae</taxon>
        <taxon>Pentapetalae</taxon>
        <taxon>asterids</taxon>
        <taxon>lamiids</taxon>
        <taxon>Solanales</taxon>
        <taxon>Solanaceae</taxon>
        <taxon>Nicotianoideae</taxon>
        <taxon>Nicotianeae</taxon>
        <taxon>Nicotiana</taxon>
    </lineage>
</organism>
<geneLocation type="chloroplast"/>
<keyword id="KW-0150">Chloroplast</keyword>
<keyword id="KW-0472">Membrane</keyword>
<keyword id="KW-0934">Plastid</keyword>
<keyword id="KW-1185">Reference proteome</keyword>
<keyword id="KW-0793">Thylakoid</keyword>
<keyword id="KW-0812">Transmembrane</keyword>
<keyword id="KW-1133">Transmembrane helix</keyword>
<reference key="1">
    <citation type="journal article" date="2006" name="Mol. Genet. Genomics">
        <title>The chloroplast genome of Nicotiana sylvestris and Nicotiana tomentosiformis: complete sequencing confirms that the Nicotiana sylvestris progenitor is the maternal genome donor of Nicotiana tabacum.</title>
        <authorList>
            <person name="Yukawa M."/>
            <person name="Tsudzuki T."/>
            <person name="Sugiura M."/>
        </authorList>
    </citation>
    <scope>NUCLEOTIDE SEQUENCE [LARGE SCALE GENOMIC DNA]</scope>
</reference>
<protein>
    <recommendedName>
        <fullName evidence="1">Protein PsbN</fullName>
    </recommendedName>
</protein>